<feature type="chain" id="PRO_0000104597" description="Large ribosomal subunit protein uL30">
    <location>
        <begin position="1"/>
        <end position="74"/>
    </location>
</feature>
<dbReference type="EMBL" id="X17524">
    <property type="protein sequence ID" value="CAA35565.1"/>
    <property type="molecule type" value="Genomic_DNA"/>
</dbReference>
<dbReference type="PIR" id="S29889">
    <property type="entry name" value="S29889"/>
</dbReference>
<dbReference type="RefSeq" id="WP_010080391.1">
    <property type="nucleotide sequence ID" value="NZ_QVMY01000019.1"/>
</dbReference>
<dbReference type="SMR" id="P33104"/>
<dbReference type="STRING" id="1232675.GCA_000309825_02140"/>
<dbReference type="GeneID" id="93343566"/>
<dbReference type="PATRIC" id="fig|1270.31.peg.1695"/>
<dbReference type="OMA" id="MNGKRIQ"/>
<dbReference type="GO" id="GO:0022625">
    <property type="term" value="C:cytosolic large ribosomal subunit"/>
    <property type="evidence" value="ECO:0007669"/>
    <property type="project" value="TreeGrafter"/>
</dbReference>
<dbReference type="GO" id="GO:0003735">
    <property type="term" value="F:structural constituent of ribosome"/>
    <property type="evidence" value="ECO:0007669"/>
    <property type="project" value="InterPro"/>
</dbReference>
<dbReference type="GO" id="GO:0006412">
    <property type="term" value="P:translation"/>
    <property type="evidence" value="ECO:0007669"/>
    <property type="project" value="UniProtKB-UniRule"/>
</dbReference>
<dbReference type="CDD" id="cd01658">
    <property type="entry name" value="Ribosomal_L30"/>
    <property type="match status" value="1"/>
</dbReference>
<dbReference type="Gene3D" id="3.30.1390.20">
    <property type="entry name" value="Ribosomal protein L30, ferredoxin-like fold domain"/>
    <property type="match status" value="1"/>
</dbReference>
<dbReference type="HAMAP" id="MF_01371_B">
    <property type="entry name" value="Ribosomal_uL30_B"/>
    <property type="match status" value="1"/>
</dbReference>
<dbReference type="InterPro" id="IPR036919">
    <property type="entry name" value="Ribo_uL30_ferredoxin-like_sf"/>
</dbReference>
<dbReference type="InterPro" id="IPR005996">
    <property type="entry name" value="Ribosomal_uL30_bac-type"/>
</dbReference>
<dbReference type="InterPro" id="IPR018038">
    <property type="entry name" value="Ribosomal_uL30_CS"/>
</dbReference>
<dbReference type="InterPro" id="IPR016082">
    <property type="entry name" value="Ribosomal_uL30_ferredoxin-like"/>
</dbReference>
<dbReference type="NCBIfam" id="TIGR01308">
    <property type="entry name" value="rpmD_bact"/>
    <property type="match status" value="1"/>
</dbReference>
<dbReference type="PANTHER" id="PTHR15892:SF2">
    <property type="entry name" value="LARGE RIBOSOMAL SUBUNIT PROTEIN UL30M"/>
    <property type="match status" value="1"/>
</dbReference>
<dbReference type="PANTHER" id="PTHR15892">
    <property type="entry name" value="MITOCHONDRIAL RIBOSOMAL PROTEIN L30"/>
    <property type="match status" value="1"/>
</dbReference>
<dbReference type="Pfam" id="PF00327">
    <property type="entry name" value="Ribosomal_L30"/>
    <property type="match status" value="1"/>
</dbReference>
<dbReference type="SUPFAM" id="SSF55129">
    <property type="entry name" value="Ribosomal protein L30p/L7e"/>
    <property type="match status" value="1"/>
</dbReference>
<dbReference type="PROSITE" id="PS00634">
    <property type="entry name" value="RIBOSOMAL_L30"/>
    <property type="match status" value="1"/>
</dbReference>
<comment type="subunit">
    <text evidence="1">Part of the 50S ribosomal subunit.</text>
</comment>
<comment type="similarity">
    <text evidence="1">Belongs to the universal ribosomal protein uL30 family.</text>
</comment>
<sequence length="74" mass="8096">MFESTRKNIQPSDATLVITQTRGVTGSKQNHRDTLRSLGLKRIGHQVTRKADAVTVGMVNTVPHLVSVEEVNNG</sequence>
<gene>
    <name evidence="1" type="primary">rpmD</name>
</gene>
<proteinExistence type="inferred from homology"/>
<organism>
    <name type="scientific">Micrococcus luteus</name>
    <name type="common">Micrococcus lysodeikticus</name>
    <dbReference type="NCBI Taxonomy" id="1270"/>
    <lineage>
        <taxon>Bacteria</taxon>
        <taxon>Bacillati</taxon>
        <taxon>Actinomycetota</taxon>
        <taxon>Actinomycetes</taxon>
        <taxon>Micrococcales</taxon>
        <taxon>Micrococcaceae</taxon>
        <taxon>Micrococcus</taxon>
    </lineage>
</organism>
<keyword id="KW-0687">Ribonucleoprotein</keyword>
<keyword id="KW-0689">Ribosomal protein</keyword>
<accession>P33104</accession>
<reference key="1">
    <citation type="journal article" date="1989" name="J. Mol. Evol.">
        <title>Spectinomycin operon of Micrococcus luteus: evolutionary implications of organization and novel codon usage.</title>
        <authorList>
            <person name="Ohama T."/>
            <person name="Muto A."/>
            <person name="Osawa S."/>
        </authorList>
    </citation>
    <scope>NUCLEOTIDE SEQUENCE [GENOMIC DNA]</scope>
</reference>
<protein>
    <recommendedName>
        <fullName evidence="1">Large ribosomal subunit protein uL30</fullName>
    </recommendedName>
    <alternativeName>
        <fullName evidence="2">50S ribosomal protein L30</fullName>
    </alternativeName>
</protein>
<name>RL30_MICLU</name>
<evidence type="ECO:0000255" key="1">
    <source>
        <dbReference type="HAMAP-Rule" id="MF_01371"/>
    </source>
</evidence>
<evidence type="ECO:0000305" key="2"/>